<name>NCAP_I61A1</name>
<gene>
    <name evidence="1" type="primary">NP</name>
</gene>
<sequence length="498" mass="56101">MASQGTKRSYEQMETGGERQDATEIRASVGRMIGGIGRFYIQMCTELKLSDYEGRLIQNSITIERMVLSAFDERRNKYLEEHPSAGKDPKKTGGPIYRRIDGKWMRELILYDKEEIRRVWRQANNGEDATAGLTHIMIWHSNLNDATYQRTRALVRTGMDPRMCSLMQGSTLPRRSGAAGAAVKGVGTIVMELIRMIKRGINDRNFWRGENGRRTRIAYERMCNILKGKFQTAAQRAMMDQVRESRNPGNAEIEDLIFLARSALILRGSVAHKSCLPACVYGLAVASGHDFEREGYSLVGIEPFKLLQNSQVFSLIRPNENPAHKSQLVWMACHSAAFEDLRVSGFIRGKRVVPRGKLSTRGVQIASNENVEAMDSSTLELRSRYWAIRTRSGGNTNQQKASAGQISVQPTFSVQRNLPFERATVMAAFVGNNEGRTSDMRTEIIRMMESAKPEDLSFQGRGVFELSDEKATNPIVPSFDMNNEGSYFFGDNAEEYDN</sequence>
<keyword id="KW-0167">Capsid protein</keyword>
<keyword id="KW-1139">Helical capsid protein</keyword>
<keyword id="KW-1048">Host nucleus</keyword>
<keyword id="KW-0945">Host-virus interaction</keyword>
<keyword id="KW-0687">Ribonucleoprotein</keyword>
<keyword id="KW-0694">RNA-binding</keyword>
<keyword id="KW-0543">Viral nucleoprotein</keyword>
<keyword id="KW-1163">Viral penetration into host nucleus</keyword>
<keyword id="KW-0946">Virion</keyword>
<keyword id="KW-1160">Virus entry into host cell</keyword>
<protein>
    <recommendedName>
        <fullName evidence="1">Nucleoprotein</fullName>
    </recommendedName>
    <alternativeName>
        <fullName evidence="1">Nucleocapsid protein</fullName>
        <shortName evidence="1">Protein N</shortName>
    </alternativeName>
</protein>
<organismHost>
    <name type="scientific">Aves</name>
    <dbReference type="NCBI Taxonomy" id="8782"/>
</organismHost>
<organismHost>
    <name type="scientific">Homo sapiens</name>
    <name type="common">Human</name>
    <dbReference type="NCBI Taxonomy" id="9606"/>
</organismHost>
<organismHost>
    <name type="scientific">Sus scrofa</name>
    <name type="common">Pig</name>
    <dbReference type="NCBI Taxonomy" id="9823"/>
</organismHost>
<feature type="chain" id="PRO_0000079138" description="Nucleoprotein">
    <location>
        <begin position="1"/>
        <end position="498"/>
    </location>
</feature>
<feature type="region of interest" description="Disordered" evidence="2">
    <location>
        <begin position="1"/>
        <end position="22"/>
    </location>
</feature>
<feature type="short sequence motif" description="Unconventional nuclear localization signal" evidence="1">
    <location>
        <begin position="1"/>
        <end position="18"/>
    </location>
</feature>
<feature type="short sequence motif" description="Bipartite nuclear localization signal" evidence="1">
    <location>
        <begin position="198"/>
        <end position="216"/>
    </location>
</feature>
<feature type="compositionally biased region" description="Basic and acidic residues" evidence="2">
    <location>
        <begin position="8"/>
        <end position="22"/>
    </location>
</feature>
<feature type="sequence variant">
    <original>E</original>
    <variation>D</variation>
    <location>
        <position position="302"/>
    </location>
</feature>
<organism>
    <name type="scientific">Influenza A virus (strain A/Swine/Wisconsin/1/1961 H1N1)</name>
    <dbReference type="NCBI Taxonomy" id="383533"/>
    <lineage>
        <taxon>Viruses</taxon>
        <taxon>Riboviria</taxon>
        <taxon>Orthornavirae</taxon>
        <taxon>Negarnaviricota</taxon>
        <taxon>Polyploviricotina</taxon>
        <taxon>Insthoviricetes</taxon>
        <taxon>Articulavirales</taxon>
        <taxon>Orthomyxoviridae</taxon>
        <taxon>Alphainfluenzavirus</taxon>
        <taxon>Alphainfluenzavirus influenzae</taxon>
        <taxon>Influenza A virus</taxon>
    </lineage>
</organism>
<dbReference type="EMBL" id="M63763">
    <property type="protein sequence ID" value="AAA52262.1"/>
    <property type="molecule type" value="Genomic_RNA"/>
</dbReference>
<dbReference type="EMBL" id="CY032216">
    <property type="protein sequence ID" value="ACD85158.1"/>
    <property type="molecule type" value="Viral_cRNA"/>
</dbReference>
<dbReference type="SMR" id="P26083"/>
<dbReference type="PRO" id="PR:P26083"/>
<dbReference type="Proteomes" id="UP000007769">
    <property type="component" value="Genome"/>
</dbReference>
<dbReference type="GO" id="GO:0019029">
    <property type="term" value="C:helical viral capsid"/>
    <property type="evidence" value="ECO:0007669"/>
    <property type="project" value="UniProtKB-UniRule"/>
</dbReference>
<dbReference type="GO" id="GO:0043657">
    <property type="term" value="C:host cell"/>
    <property type="evidence" value="ECO:0007669"/>
    <property type="project" value="GOC"/>
</dbReference>
<dbReference type="GO" id="GO:0042025">
    <property type="term" value="C:host cell nucleus"/>
    <property type="evidence" value="ECO:0007669"/>
    <property type="project" value="UniProtKB-SubCell"/>
</dbReference>
<dbReference type="GO" id="GO:1990904">
    <property type="term" value="C:ribonucleoprotein complex"/>
    <property type="evidence" value="ECO:0007669"/>
    <property type="project" value="UniProtKB-KW"/>
</dbReference>
<dbReference type="GO" id="GO:0019013">
    <property type="term" value="C:viral nucleocapsid"/>
    <property type="evidence" value="ECO:0007669"/>
    <property type="project" value="UniProtKB-UniRule"/>
</dbReference>
<dbReference type="GO" id="GO:0003723">
    <property type="term" value="F:RNA binding"/>
    <property type="evidence" value="ECO:0007669"/>
    <property type="project" value="UniProtKB-UniRule"/>
</dbReference>
<dbReference type="GO" id="GO:0005198">
    <property type="term" value="F:structural molecule activity"/>
    <property type="evidence" value="ECO:0007669"/>
    <property type="project" value="UniProtKB-UniRule"/>
</dbReference>
<dbReference type="GO" id="GO:0046718">
    <property type="term" value="P:symbiont entry into host cell"/>
    <property type="evidence" value="ECO:0007669"/>
    <property type="project" value="UniProtKB-KW"/>
</dbReference>
<dbReference type="GO" id="GO:0075732">
    <property type="term" value="P:viral penetration into host nucleus"/>
    <property type="evidence" value="ECO:0007669"/>
    <property type="project" value="UniProtKB-UniRule"/>
</dbReference>
<dbReference type="HAMAP" id="MF_04070">
    <property type="entry name" value="INFV_NCAP"/>
    <property type="match status" value="1"/>
</dbReference>
<dbReference type="InterPro" id="IPR002141">
    <property type="entry name" value="Flu_NP"/>
</dbReference>
<dbReference type="Pfam" id="PF00506">
    <property type="entry name" value="Flu_NP"/>
    <property type="match status" value="1"/>
</dbReference>
<dbReference type="SUPFAM" id="SSF161003">
    <property type="entry name" value="flu NP-like"/>
    <property type="match status" value="1"/>
</dbReference>
<accession>P26083</accession>
<accession>B3EUR0</accession>
<evidence type="ECO:0000255" key="1">
    <source>
        <dbReference type="HAMAP-Rule" id="MF_04070"/>
    </source>
</evidence>
<evidence type="ECO:0000256" key="2">
    <source>
        <dbReference type="SAM" id="MobiDB-lite"/>
    </source>
</evidence>
<comment type="function">
    <text evidence="1">Encapsidates the negative strand viral RNA, protecting it from nucleases. The encapsidated genomic RNA is termed the ribonucleoprotein (RNP) and serves as template for transcription and replication. The RNP needs to be localized in the host nucleus to start an infectious cycle, but is too large to diffuse through the nuclear pore complex. NP comprises at least 2 nuclear localization signals that are responsible for the active RNP import into the nucleus through cellular importin alpha/beta pathway. Later in the infection, nclear export of RNPs are mediated through viral proteins NEP interacting with M1 which binds nucleoproteins. It is possible that nucleoprotein binds directly host exportin-1/XPO1 and plays an active role in RNPs nuclear export. M1 interaction with RNP seems to hide nucleoprotein's nuclear localization signals. Soon after a virion infects a new cell, M1 dissociates from the RNP under acidification of the virion driven by M2 protein. Dissociation of M1 from RNP unmasks nucleoprotein's nuclear localization signals, targeting the RNP to the nucleus.</text>
</comment>
<comment type="subunit">
    <text evidence="1">Homomultimerizes to form the nucleocapsid. May bind host exportin-1/XPO1. Binds to viral genomic RNA. Protein-RNA contacts are mediated by a combination of electrostatic interactions between positively charged residues and the phosphate backbone and planar interactions between aromatic side chains and bases.</text>
</comment>
<comment type="subcellular location">
    <subcellularLocation>
        <location evidence="1">Virion</location>
    </subcellularLocation>
    <subcellularLocation>
        <location evidence="1">Host nucleus</location>
    </subcellularLocation>
</comment>
<comment type="PTM">
    <text evidence="1">Late in virus-infected cells, may be cleaved from a 56-kDa protein to a 53-kDa protein by a cellular caspase. This cleavage might be a marker for the onset of apoptosis in infected cells or have a specific function in virus host interaction.</text>
</comment>
<comment type="similarity">
    <text evidence="1">Belongs to the influenza viruses nucleoprotein family.</text>
</comment>
<reference key="1">
    <citation type="journal article" date="1991" name="J. Virol.">
        <title>Evolution of influenza A virus nucleoprotein genes: implications for the origins of H1N1 human and classical swine viruses.</title>
        <authorList>
            <person name="Gorman O.T."/>
            <person name="Bean W.J."/>
            <person name="Kawaoka Y."/>
            <person name="Donatelli I."/>
            <person name="Guo Y."/>
            <person name="Webster R.G."/>
        </authorList>
    </citation>
    <scope>NUCLEOTIDE SEQUENCE [GENOMIC RNA]</scope>
</reference>
<proteinExistence type="inferred from homology"/>